<accession>Q46X10</accession>
<comment type="function">
    <text evidence="1">Catalyzes the phosphorylation of the 3'-hydroxyl group of dephosphocoenzyme A to form coenzyme A.</text>
</comment>
<comment type="catalytic activity">
    <reaction evidence="1">
        <text>3'-dephospho-CoA + ATP = ADP + CoA + H(+)</text>
        <dbReference type="Rhea" id="RHEA:18245"/>
        <dbReference type="ChEBI" id="CHEBI:15378"/>
        <dbReference type="ChEBI" id="CHEBI:30616"/>
        <dbReference type="ChEBI" id="CHEBI:57287"/>
        <dbReference type="ChEBI" id="CHEBI:57328"/>
        <dbReference type="ChEBI" id="CHEBI:456216"/>
        <dbReference type="EC" id="2.7.1.24"/>
    </reaction>
</comment>
<comment type="pathway">
    <text evidence="1">Cofactor biosynthesis; coenzyme A biosynthesis; CoA from (R)-pantothenate: step 5/5.</text>
</comment>
<comment type="subcellular location">
    <subcellularLocation>
        <location evidence="1">Cytoplasm</location>
    </subcellularLocation>
</comment>
<comment type="similarity">
    <text evidence="1">Belongs to the CoaE family.</text>
</comment>
<protein>
    <recommendedName>
        <fullName evidence="1">Dephospho-CoA kinase</fullName>
        <ecNumber evidence="1">2.7.1.24</ecNumber>
    </recommendedName>
    <alternativeName>
        <fullName evidence="1">Dephosphocoenzyme A kinase</fullName>
    </alternativeName>
</protein>
<reference key="1">
    <citation type="journal article" date="2010" name="PLoS ONE">
        <title>The complete multipartite genome sequence of Cupriavidus necator JMP134, a versatile pollutant degrader.</title>
        <authorList>
            <person name="Lykidis A."/>
            <person name="Perez-Pantoja D."/>
            <person name="Ledger T."/>
            <person name="Mavromatis K."/>
            <person name="Anderson I.J."/>
            <person name="Ivanova N.N."/>
            <person name="Hooper S.D."/>
            <person name="Lapidus A."/>
            <person name="Lucas S."/>
            <person name="Gonzalez B."/>
            <person name="Kyrpides N.C."/>
        </authorList>
    </citation>
    <scope>NUCLEOTIDE SEQUENCE [LARGE SCALE GENOMIC DNA]</scope>
    <source>
        <strain>JMP134 / LMG 1197</strain>
    </source>
</reference>
<sequence length="208" mass="22088">MLEIGLTGGIGSGKTRVADMFAARGAAIIDTDLLAHEITAPGGQAIPALVEAFGPQCLRPDGAMDRDAMRAVVFADPAAKARLEGITHPLIRELTTSRAAEIAHAGEHPYLIYVVPLLVESGAWLNRVGRVLVVDCSEDTQIARVMSRNGFSREQVLAIMAKQATRAQRLAVAHDVIDNDGPVEALTAQVDQLDRTYRALSAAGVTQA</sequence>
<organism>
    <name type="scientific">Cupriavidus pinatubonensis (strain JMP 134 / LMG 1197)</name>
    <name type="common">Cupriavidus necator (strain JMP 134)</name>
    <dbReference type="NCBI Taxonomy" id="264198"/>
    <lineage>
        <taxon>Bacteria</taxon>
        <taxon>Pseudomonadati</taxon>
        <taxon>Pseudomonadota</taxon>
        <taxon>Betaproteobacteria</taxon>
        <taxon>Burkholderiales</taxon>
        <taxon>Burkholderiaceae</taxon>
        <taxon>Cupriavidus</taxon>
    </lineage>
</organism>
<gene>
    <name evidence="1" type="primary">coaE</name>
    <name type="ordered locus">Reut_A2963</name>
</gene>
<proteinExistence type="inferred from homology"/>
<dbReference type="EC" id="2.7.1.24" evidence="1"/>
<dbReference type="EMBL" id="CP000090">
    <property type="protein sequence ID" value="AAZ62323.1"/>
    <property type="molecule type" value="Genomic_DNA"/>
</dbReference>
<dbReference type="SMR" id="Q46X10"/>
<dbReference type="STRING" id="264198.Reut_A2963"/>
<dbReference type="KEGG" id="reu:Reut_A2963"/>
<dbReference type="eggNOG" id="COG0237">
    <property type="taxonomic scope" value="Bacteria"/>
</dbReference>
<dbReference type="HOGENOM" id="CLU_057180_1_2_4"/>
<dbReference type="OrthoDB" id="9812943at2"/>
<dbReference type="UniPathway" id="UPA00241">
    <property type="reaction ID" value="UER00356"/>
</dbReference>
<dbReference type="GO" id="GO:0005737">
    <property type="term" value="C:cytoplasm"/>
    <property type="evidence" value="ECO:0007669"/>
    <property type="project" value="UniProtKB-SubCell"/>
</dbReference>
<dbReference type="GO" id="GO:0005524">
    <property type="term" value="F:ATP binding"/>
    <property type="evidence" value="ECO:0007669"/>
    <property type="project" value="UniProtKB-UniRule"/>
</dbReference>
<dbReference type="GO" id="GO:0004140">
    <property type="term" value="F:dephospho-CoA kinase activity"/>
    <property type="evidence" value="ECO:0007669"/>
    <property type="project" value="UniProtKB-UniRule"/>
</dbReference>
<dbReference type="GO" id="GO:0015937">
    <property type="term" value="P:coenzyme A biosynthetic process"/>
    <property type="evidence" value="ECO:0007669"/>
    <property type="project" value="UniProtKB-UniRule"/>
</dbReference>
<dbReference type="CDD" id="cd02022">
    <property type="entry name" value="DPCK"/>
    <property type="match status" value="1"/>
</dbReference>
<dbReference type="Gene3D" id="3.40.50.300">
    <property type="entry name" value="P-loop containing nucleotide triphosphate hydrolases"/>
    <property type="match status" value="1"/>
</dbReference>
<dbReference type="HAMAP" id="MF_00376">
    <property type="entry name" value="Dephospho_CoA_kinase"/>
    <property type="match status" value="1"/>
</dbReference>
<dbReference type="InterPro" id="IPR001977">
    <property type="entry name" value="Depp_CoAkinase"/>
</dbReference>
<dbReference type="InterPro" id="IPR027417">
    <property type="entry name" value="P-loop_NTPase"/>
</dbReference>
<dbReference type="NCBIfam" id="TIGR00152">
    <property type="entry name" value="dephospho-CoA kinase"/>
    <property type="match status" value="1"/>
</dbReference>
<dbReference type="PANTHER" id="PTHR10695:SF46">
    <property type="entry name" value="BIFUNCTIONAL COENZYME A SYNTHASE-RELATED"/>
    <property type="match status" value="1"/>
</dbReference>
<dbReference type="PANTHER" id="PTHR10695">
    <property type="entry name" value="DEPHOSPHO-COA KINASE-RELATED"/>
    <property type="match status" value="1"/>
</dbReference>
<dbReference type="Pfam" id="PF01121">
    <property type="entry name" value="CoaE"/>
    <property type="match status" value="1"/>
</dbReference>
<dbReference type="SUPFAM" id="SSF52540">
    <property type="entry name" value="P-loop containing nucleoside triphosphate hydrolases"/>
    <property type="match status" value="1"/>
</dbReference>
<dbReference type="PROSITE" id="PS51219">
    <property type="entry name" value="DPCK"/>
    <property type="match status" value="1"/>
</dbReference>
<keyword id="KW-0067">ATP-binding</keyword>
<keyword id="KW-0173">Coenzyme A biosynthesis</keyword>
<keyword id="KW-0963">Cytoplasm</keyword>
<keyword id="KW-0418">Kinase</keyword>
<keyword id="KW-0547">Nucleotide-binding</keyword>
<keyword id="KW-0808">Transferase</keyword>
<feature type="chain" id="PRO_0000243325" description="Dephospho-CoA kinase">
    <location>
        <begin position="1"/>
        <end position="208"/>
    </location>
</feature>
<feature type="domain" description="DPCK" evidence="1">
    <location>
        <begin position="3"/>
        <end position="208"/>
    </location>
</feature>
<feature type="binding site" evidence="1">
    <location>
        <begin position="11"/>
        <end position="16"/>
    </location>
    <ligand>
        <name>ATP</name>
        <dbReference type="ChEBI" id="CHEBI:30616"/>
    </ligand>
</feature>
<evidence type="ECO:0000255" key="1">
    <source>
        <dbReference type="HAMAP-Rule" id="MF_00376"/>
    </source>
</evidence>
<name>COAE_CUPPJ</name>